<reference key="1">
    <citation type="journal article" date="2007" name="Proc. Natl. Acad. Sci. U.S.A.">
        <title>Deep-sea vent epsilon-proteobacterial genomes provide insights into emergence of pathogens.</title>
        <authorList>
            <person name="Nakagawa S."/>
            <person name="Takaki Y."/>
            <person name="Shimamura S."/>
            <person name="Reysenbach A.-L."/>
            <person name="Takai K."/>
            <person name="Horikoshi K."/>
        </authorList>
    </citation>
    <scope>NUCLEOTIDE SEQUENCE [LARGE SCALE GENOMIC DNA]</scope>
    <source>
        <strain>SB155-2</strain>
    </source>
</reference>
<evidence type="ECO:0000255" key="1">
    <source>
        <dbReference type="HAMAP-Rule" id="MF_00089"/>
    </source>
</evidence>
<keyword id="KW-0004">4Fe-4S</keyword>
<keyword id="KW-0408">Iron</keyword>
<keyword id="KW-0411">Iron-sulfur</keyword>
<keyword id="KW-0456">Lyase</keyword>
<keyword id="KW-0479">Metal-binding</keyword>
<keyword id="KW-1185">Reference proteome</keyword>
<keyword id="KW-0949">S-adenosyl-L-methionine</keyword>
<keyword id="KW-0784">Thiamine biosynthesis</keyword>
<keyword id="KW-0862">Zinc</keyword>
<feature type="chain" id="PRO_1000004784" description="Phosphomethylpyrimidine synthase">
    <location>
        <begin position="1"/>
        <end position="444"/>
    </location>
</feature>
<feature type="binding site" evidence="1">
    <location>
        <position position="80"/>
    </location>
    <ligand>
        <name>substrate</name>
    </ligand>
</feature>
<feature type="binding site" evidence="1">
    <location>
        <position position="109"/>
    </location>
    <ligand>
        <name>substrate</name>
    </ligand>
</feature>
<feature type="binding site" evidence="1">
    <location>
        <position position="138"/>
    </location>
    <ligand>
        <name>substrate</name>
    </ligand>
</feature>
<feature type="binding site" evidence="1">
    <location>
        <position position="174"/>
    </location>
    <ligand>
        <name>substrate</name>
    </ligand>
</feature>
<feature type="binding site" evidence="1">
    <location>
        <begin position="194"/>
        <end position="196"/>
    </location>
    <ligand>
        <name>substrate</name>
    </ligand>
</feature>
<feature type="binding site" evidence="1">
    <location>
        <begin position="235"/>
        <end position="238"/>
    </location>
    <ligand>
        <name>substrate</name>
    </ligand>
</feature>
<feature type="binding site" evidence="1">
    <location>
        <position position="274"/>
    </location>
    <ligand>
        <name>substrate</name>
    </ligand>
</feature>
<feature type="binding site" evidence="1">
    <location>
        <position position="278"/>
    </location>
    <ligand>
        <name>Zn(2+)</name>
        <dbReference type="ChEBI" id="CHEBI:29105"/>
    </ligand>
</feature>
<feature type="binding site" evidence="1">
    <location>
        <position position="301"/>
    </location>
    <ligand>
        <name>substrate</name>
    </ligand>
</feature>
<feature type="binding site" evidence="1">
    <location>
        <position position="342"/>
    </location>
    <ligand>
        <name>Zn(2+)</name>
        <dbReference type="ChEBI" id="CHEBI:29105"/>
    </ligand>
</feature>
<feature type="binding site" evidence="1">
    <location>
        <position position="422"/>
    </location>
    <ligand>
        <name>[4Fe-4S] cluster</name>
        <dbReference type="ChEBI" id="CHEBI:49883"/>
        <note>4Fe-4S-S-AdoMet</note>
    </ligand>
</feature>
<feature type="binding site" evidence="1">
    <location>
        <position position="425"/>
    </location>
    <ligand>
        <name>[4Fe-4S] cluster</name>
        <dbReference type="ChEBI" id="CHEBI:49883"/>
        <note>4Fe-4S-S-AdoMet</note>
    </ligand>
</feature>
<feature type="binding site" evidence="1">
    <location>
        <position position="430"/>
    </location>
    <ligand>
        <name>[4Fe-4S] cluster</name>
        <dbReference type="ChEBI" id="CHEBI:49883"/>
        <note>4Fe-4S-S-AdoMet</note>
    </ligand>
</feature>
<protein>
    <recommendedName>
        <fullName evidence="1">Phosphomethylpyrimidine synthase</fullName>
        <ecNumber evidence="1">4.1.99.17</ecNumber>
    </recommendedName>
    <alternativeName>
        <fullName evidence="1">Hydroxymethylpyrimidine phosphate synthase</fullName>
        <shortName evidence="1">HMP-P synthase</shortName>
        <shortName evidence="1">HMP-phosphate synthase</shortName>
        <shortName evidence="1">HMPP synthase</shortName>
    </alternativeName>
    <alternativeName>
        <fullName evidence="1">Thiamine biosynthesis protein ThiC</fullName>
    </alternativeName>
</protein>
<comment type="function">
    <text evidence="1">Catalyzes the synthesis of the hydroxymethylpyrimidine phosphate (HMP-P) moiety of thiamine from aminoimidazole ribotide (AIR) in a radical S-adenosyl-L-methionine (SAM)-dependent reaction.</text>
</comment>
<comment type="catalytic activity">
    <reaction evidence="1">
        <text>5-amino-1-(5-phospho-beta-D-ribosyl)imidazole + S-adenosyl-L-methionine = 4-amino-2-methyl-5-(phosphooxymethyl)pyrimidine + CO + 5'-deoxyadenosine + formate + L-methionine + 3 H(+)</text>
        <dbReference type="Rhea" id="RHEA:24840"/>
        <dbReference type="ChEBI" id="CHEBI:15378"/>
        <dbReference type="ChEBI" id="CHEBI:15740"/>
        <dbReference type="ChEBI" id="CHEBI:17245"/>
        <dbReference type="ChEBI" id="CHEBI:17319"/>
        <dbReference type="ChEBI" id="CHEBI:57844"/>
        <dbReference type="ChEBI" id="CHEBI:58354"/>
        <dbReference type="ChEBI" id="CHEBI:59789"/>
        <dbReference type="ChEBI" id="CHEBI:137981"/>
        <dbReference type="EC" id="4.1.99.17"/>
    </reaction>
</comment>
<comment type="cofactor">
    <cofactor evidence="1">
        <name>[4Fe-4S] cluster</name>
        <dbReference type="ChEBI" id="CHEBI:49883"/>
    </cofactor>
    <text evidence="1">Binds 1 [4Fe-4S] cluster per subunit. The cluster is coordinated with 3 cysteines and an exchangeable S-adenosyl-L-methionine.</text>
</comment>
<comment type="pathway">
    <text evidence="1">Cofactor biosynthesis; thiamine diphosphate biosynthesis.</text>
</comment>
<comment type="subunit">
    <text evidence="1">Homodimer.</text>
</comment>
<comment type="similarity">
    <text evidence="1">Belongs to the ThiC family.</text>
</comment>
<sequence length="444" mass="49720">MRKEWVEKRKKDSVRTQMYYARQGIVTEEMEYVAKVEGLDPELIRKEVARGRMIIPANINHLHQKPMAIGIAAKCKINANIGSSALASDAAGEVEKVKVCQKYGADTIMDLSTGGDLDAIREEVIKHAEVPIGTVPIYQILHDCNNKIEDLTIDKMLEVIERQAQQGVSYFTIHAGFLLRFMPLVAKRKMGIVSRGGSLMAAWMMHYHKENPFYTAFDDILDICRKYDVSLSLGDSLRPGCLADASDDAQLEELKVLGELTLKAWDKDVQVMIEGPGHVPMNQIERNIKIERDYCHEAPFYVLGPLVTDIAAGYDHLASAIGAAMAGWYGASMLCYVTPKEHLGLPNAEDVREGIVAYKIAAHAADIARGRKGARDVDDAMSDARYKFDWNKQFELALDPDRAREYHDETLPQDVFKEAEFCSMCGPKFCSYKITQDILEKHGA</sequence>
<proteinExistence type="inferred from homology"/>
<accession>A6Q2K1</accession>
<organism>
    <name type="scientific">Nitratiruptor sp. (strain SB155-2)</name>
    <dbReference type="NCBI Taxonomy" id="387092"/>
    <lineage>
        <taxon>Bacteria</taxon>
        <taxon>Pseudomonadati</taxon>
        <taxon>Campylobacterota</taxon>
        <taxon>Epsilonproteobacteria</taxon>
        <taxon>Nautiliales</taxon>
        <taxon>Nitratiruptoraceae</taxon>
        <taxon>Nitratiruptor</taxon>
    </lineage>
</organism>
<dbReference type="EC" id="4.1.99.17" evidence="1"/>
<dbReference type="EMBL" id="AP009178">
    <property type="protein sequence ID" value="BAF69710.1"/>
    <property type="molecule type" value="Genomic_DNA"/>
</dbReference>
<dbReference type="RefSeq" id="WP_012081973.1">
    <property type="nucleotide sequence ID" value="NC_009662.1"/>
</dbReference>
<dbReference type="SMR" id="A6Q2K1"/>
<dbReference type="FunCoup" id="A6Q2K1">
    <property type="interactions" value="417"/>
</dbReference>
<dbReference type="STRING" id="387092.NIS_0596"/>
<dbReference type="KEGG" id="nis:NIS_0596"/>
<dbReference type="eggNOG" id="COG0422">
    <property type="taxonomic scope" value="Bacteria"/>
</dbReference>
<dbReference type="HOGENOM" id="CLU_013181_2_1_7"/>
<dbReference type="InParanoid" id="A6Q2K1"/>
<dbReference type="OrthoDB" id="9805897at2"/>
<dbReference type="UniPathway" id="UPA00060"/>
<dbReference type="Proteomes" id="UP000001118">
    <property type="component" value="Chromosome"/>
</dbReference>
<dbReference type="GO" id="GO:0005829">
    <property type="term" value="C:cytosol"/>
    <property type="evidence" value="ECO:0007669"/>
    <property type="project" value="TreeGrafter"/>
</dbReference>
<dbReference type="GO" id="GO:0051539">
    <property type="term" value="F:4 iron, 4 sulfur cluster binding"/>
    <property type="evidence" value="ECO:0007669"/>
    <property type="project" value="UniProtKB-KW"/>
</dbReference>
<dbReference type="GO" id="GO:0016830">
    <property type="term" value="F:carbon-carbon lyase activity"/>
    <property type="evidence" value="ECO:0007669"/>
    <property type="project" value="InterPro"/>
</dbReference>
<dbReference type="GO" id="GO:0008270">
    <property type="term" value="F:zinc ion binding"/>
    <property type="evidence" value="ECO:0007669"/>
    <property type="project" value="UniProtKB-UniRule"/>
</dbReference>
<dbReference type="GO" id="GO:0009228">
    <property type="term" value="P:thiamine biosynthetic process"/>
    <property type="evidence" value="ECO:0007669"/>
    <property type="project" value="UniProtKB-KW"/>
</dbReference>
<dbReference type="GO" id="GO:0009229">
    <property type="term" value="P:thiamine diphosphate biosynthetic process"/>
    <property type="evidence" value="ECO:0007669"/>
    <property type="project" value="UniProtKB-UniRule"/>
</dbReference>
<dbReference type="FunFam" id="3.20.20.540:FF:000001">
    <property type="entry name" value="Phosphomethylpyrimidine synthase"/>
    <property type="match status" value="1"/>
</dbReference>
<dbReference type="Gene3D" id="6.10.250.620">
    <property type="match status" value="1"/>
</dbReference>
<dbReference type="Gene3D" id="3.20.20.540">
    <property type="entry name" value="Radical SAM ThiC family, central domain"/>
    <property type="match status" value="1"/>
</dbReference>
<dbReference type="HAMAP" id="MF_00089">
    <property type="entry name" value="ThiC"/>
    <property type="match status" value="1"/>
</dbReference>
<dbReference type="InterPro" id="IPR037509">
    <property type="entry name" value="ThiC"/>
</dbReference>
<dbReference type="InterPro" id="IPR038521">
    <property type="entry name" value="ThiC/Bza_core_dom"/>
</dbReference>
<dbReference type="InterPro" id="IPR002817">
    <property type="entry name" value="ThiC/BzaA/B"/>
</dbReference>
<dbReference type="NCBIfam" id="NF006763">
    <property type="entry name" value="PRK09284.1"/>
    <property type="match status" value="1"/>
</dbReference>
<dbReference type="NCBIfam" id="NF009895">
    <property type="entry name" value="PRK13352.1"/>
    <property type="match status" value="1"/>
</dbReference>
<dbReference type="NCBIfam" id="TIGR00190">
    <property type="entry name" value="thiC"/>
    <property type="match status" value="1"/>
</dbReference>
<dbReference type="PANTHER" id="PTHR30557:SF1">
    <property type="entry name" value="PHOSPHOMETHYLPYRIMIDINE SYNTHASE, CHLOROPLASTIC"/>
    <property type="match status" value="1"/>
</dbReference>
<dbReference type="PANTHER" id="PTHR30557">
    <property type="entry name" value="THIAMINE BIOSYNTHESIS PROTEIN THIC"/>
    <property type="match status" value="1"/>
</dbReference>
<dbReference type="Pfam" id="PF01964">
    <property type="entry name" value="ThiC_Rad_SAM"/>
    <property type="match status" value="1"/>
</dbReference>
<dbReference type="SFLD" id="SFLDF00407">
    <property type="entry name" value="phosphomethylpyrimidine_syntha"/>
    <property type="match status" value="1"/>
</dbReference>
<dbReference type="SFLD" id="SFLDG01114">
    <property type="entry name" value="phosphomethylpyrimidine_syntha"/>
    <property type="match status" value="1"/>
</dbReference>
<dbReference type="SFLD" id="SFLDS00113">
    <property type="entry name" value="Radical_SAM_Phosphomethylpyrim"/>
    <property type="match status" value="1"/>
</dbReference>
<gene>
    <name evidence="1" type="primary">thiC</name>
    <name type="ordered locus">NIS_0596</name>
</gene>
<name>THIC_NITSB</name>